<sequence length="458" mass="49479">MENRYAIILAAGKGTRMKSKLYKVLHPVAGKPMVEHILDQVEQTEPTEIVTIVGHGAEMIKSHLGERSQYALQAEQLGTGHAVMQAQELLGGKQGTTLVITGDTPLLTAETLKNLFDYHQGKNASATILTAHAEDPTGYGRIIRDHVGIVERIVEQKDASEEEARVQEINTGTFCFDNESLFEALAKTDTNNTQGEYYLTDIIEILKKEGKAVAAYQMADFDEAMGVNDRVALSTANKIMHRRLNEMHMRNGVTFIDPDTTYIDEGVVIGSDTVIEAGVTIKGKTVIGEDCLIGAHSEIVDSHIGNQVVVKQSVIEESVVHEGADVGPYAHLRPKADVGANVHIGNFVEVKNATIDEGTKVGHLTYVGDATLGKDINVGCGVVFVNYDGKNKHQTIVGDHAFIGSATNIVAPVTIGDHAVTAAGSTITEDVPSEDLAIARARQVNKEGYAKKLPYMKD</sequence>
<feature type="chain" id="PRO_0000233770" description="Bifunctional protein GlmU">
    <location>
        <begin position="1"/>
        <end position="458"/>
    </location>
</feature>
<feature type="region of interest" description="Pyrophosphorylase" evidence="1">
    <location>
        <begin position="1"/>
        <end position="230"/>
    </location>
</feature>
<feature type="region of interest" description="Linker" evidence="1">
    <location>
        <begin position="231"/>
        <end position="251"/>
    </location>
</feature>
<feature type="region of interest" description="N-acetyltransferase" evidence="1">
    <location>
        <begin position="252"/>
        <end position="458"/>
    </location>
</feature>
<feature type="active site" description="Proton acceptor" evidence="1">
    <location>
        <position position="363"/>
    </location>
</feature>
<feature type="binding site" evidence="1">
    <location>
        <begin position="9"/>
        <end position="12"/>
    </location>
    <ligand>
        <name>UDP-N-acetyl-alpha-D-glucosamine</name>
        <dbReference type="ChEBI" id="CHEBI:57705"/>
    </ligand>
</feature>
<feature type="binding site" evidence="1">
    <location>
        <position position="23"/>
    </location>
    <ligand>
        <name>UDP-N-acetyl-alpha-D-glucosamine</name>
        <dbReference type="ChEBI" id="CHEBI:57705"/>
    </ligand>
</feature>
<feature type="binding site" evidence="1">
    <location>
        <position position="73"/>
    </location>
    <ligand>
        <name>UDP-N-acetyl-alpha-D-glucosamine</name>
        <dbReference type="ChEBI" id="CHEBI:57705"/>
    </ligand>
</feature>
<feature type="binding site" evidence="1">
    <location>
        <begin position="78"/>
        <end position="79"/>
    </location>
    <ligand>
        <name>UDP-N-acetyl-alpha-D-glucosamine</name>
        <dbReference type="ChEBI" id="CHEBI:57705"/>
    </ligand>
</feature>
<feature type="binding site" evidence="1">
    <location>
        <position position="103"/>
    </location>
    <ligand>
        <name>Mg(2+)</name>
        <dbReference type="ChEBI" id="CHEBI:18420"/>
    </ligand>
</feature>
<feature type="binding site" evidence="1">
    <location>
        <position position="140"/>
    </location>
    <ligand>
        <name>UDP-N-acetyl-alpha-D-glucosamine</name>
        <dbReference type="ChEBI" id="CHEBI:57705"/>
    </ligand>
</feature>
<feature type="binding site" evidence="1">
    <location>
        <position position="155"/>
    </location>
    <ligand>
        <name>UDP-N-acetyl-alpha-D-glucosamine</name>
        <dbReference type="ChEBI" id="CHEBI:57705"/>
    </ligand>
</feature>
<feature type="binding site" evidence="1">
    <location>
        <position position="170"/>
    </location>
    <ligand>
        <name>UDP-N-acetyl-alpha-D-glucosamine</name>
        <dbReference type="ChEBI" id="CHEBI:57705"/>
    </ligand>
</feature>
<feature type="binding site" evidence="1">
    <location>
        <position position="228"/>
    </location>
    <ligand>
        <name>Mg(2+)</name>
        <dbReference type="ChEBI" id="CHEBI:18420"/>
    </ligand>
</feature>
<feature type="binding site" evidence="1">
    <location>
        <position position="228"/>
    </location>
    <ligand>
        <name>UDP-N-acetyl-alpha-D-glucosamine</name>
        <dbReference type="ChEBI" id="CHEBI:57705"/>
    </ligand>
</feature>
<feature type="binding site" evidence="1">
    <location>
        <position position="333"/>
    </location>
    <ligand>
        <name>UDP-N-acetyl-alpha-D-glucosamine</name>
        <dbReference type="ChEBI" id="CHEBI:57705"/>
    </ligand>
</feature>
<feature type="binding site" evidence="1">
    <location>
        <position position="351"/>
    </location>
    <ligand>
        <name>UDP-N-acetyl-alpha-D-glucosamine</name>
        <dbReference type="ChEBI" id="CHEBI:57705"/>
    </ligand>
</feature>
<feature type="binding site" evidence="1">
    <location>
        <position position="366"/>
    </location>
    <ligand>
        <name>UDP-N-acetyl-alpha-D-glucosamine</name>
        <dbReference type="ChEBI" id="CHEBI:57705"/>
    </ligand>
</feature>
<feature type="binding site" evidence="1">
    <location>
        <position position="377"/>
    </location>
    <ligand>
        <name>UDP-N-acetyl-alpha-D-glucosamine</name>
        <dbReference type="ChEBI" id="CHEBI:57705"/>
    </ligand>
</feature>
<feature type="binding site" evidence="1">
    <location>
        <begin position="386"/>
        <end position="387"/>
    </location>
    <ligand>
        <name>acetyl-CoA</name>
        <dbReference type="ChEBI" id="CHEBI:57288"/>
    </ligand>
</feature>
<feature type="binding site" evidence="1">
    <location>
        <position position="405"/>
    </location>
    <ligand>
        <name>acetyl-CoA</name>
        <dbReference type="ChEBI" id="CHEBI:57288"/>
    </ligand>
</feature>
<feature type="binding site" evidence="1">
    <location>
        <position position="423"/>
    </location>
    <ligand>
        <name>acetyl-CoA</name>
        <dbReference type="ChEBI" id="CHEBI:57288"/>
    </ligand>
</feature>
<feature type="binding site" evidence="1">
    <location>
        <position position="440"/>
    </location>
    <ligand>
        <name>acetyl-CoA</name>
        <dbReference type="ChEBI" id="CHEBI:57288"/>
    </ligand>
</feature>
<gene>
    <name evidence="1" type="primary">glmU</name>
    <name type="ordered locus">EF_0059</name>
</gene>
<organism>
    <name type="scientific">Enterococcus faecalis (strain ATCC 700802 / V583)</name>
    <dbReference type="NCBI Taxonomy" id="226185"/>
    <lineage>
        <taxon>Bacteria</taxon>
        <taxon>Bacillati</taxon>
        <taxon>Bacillota</taxon>
        <taxon>Bacilli</taxon>
        <taxon>Lactobacillales</taxon>
        <taxon>Enterococcaceae</taxon>
        <taxon>Enterococcus</taxon>
    </lineage>
</organism>
<accession>Q839U1</accession>
<dbReference type="EC" id="2.7.7.23" evidence="1"/>
<dbReference type="EC" id="2.3.1.157" evidence="1"/>
<dbReference type="EMBL" id="AE016830">
    <property type="protein sequence ID" value="AAO79941.1"/>
    <property type="molecule type" value="Genomic_DNA"/>
</dbReference>
<dbReference type="RefSeq" id="NP_813869.1">
    <property type="nucleotide sequence ID" value="NC_004668.1"/>
</dbReference>
<dbReference type="SMR" id="Q839U1"/>
<dbReference type="STRING" id="226185.EF_0059"/>
<dbReference type="EnsemblBacteria" id="AAO79941">
    <property type="protein sequence ID" value="AAO79941"/>
    <property type="gene ID" value="EF_0059"/>
</dbReference>
<dbReference type="KEGG" id="efa:EF0059"/>
<dbReference type="PATRIC" id="fig|226185.45.peg.197"/>
<dbReference type="eggNOG" id="COG1207">
    <property type="taxonomic scope" value="Bacteria"/>
</dbReference>
<dbReference type="HOGENOM" id="CLU_029499_15_2_9"/>
<dbReference type="UniPathway" id="UPA00113">
    <property type="reaction ID" value="UER00532"/>
</dbReference>
<dbReference type="UniPathway" id="UPA00113">
    <property type="reaction ID" value="UER00533"/>
</dbReference>
<dbReference type="UniPathway" id="UPA00973"/>
<dbReference type="Proteomes" id="UP000001415">
    <property type="component" value="Chromosome"/>
</dbReference>
<dbReference type="GO" id="GO:0005737">
    <property type="term" value="C:cytoplasm"/>
    <property type="evidence" value="ECO:0007669"/>
    <property type="project" value="UniProtKB-SubCell"/>
</dbReference>
<dbReference type="GO" id="GO:0016020">
    <property type="term" value="C:membrane"/>
    <property type="evidence" value="ECO:0007669"/>
    <property type="project" value="GOC"/>
</dbReference>
<dbReference type="GO" id="GO:0019134">
    <property type="term" value="F:glucosamine-1-phosphate N-acetyltransferase activity"/>
    <property type="evidence" value="ECO:0007669"/>
    <property type="project" value="UniProtKB-UniRule"/>
</dbReference>
<dbReference type="GO" id="GO:0000287">
    <property type="term" value="F:magnesium ion binding"/>
    <property type="evidence" value="ECO:0007669"/>
    <property type="project" value="UniProtKB-UniRule"/>
</dbReference>
<dbReference type="GO" id="GO:0003977">
    <property type="term" value="F:UDP-N-acetylglucosamine diphosphorylase activity"/>
    <property type="evidence" value="ECO:0007669"/>
    <property type="project" value="UniProtKB-UniRule"/>
</dbReference>
<dbReference type="GO" id="GO:0000902">
    <property type="term" value="P:cell morphogenesis"/>
    <property type="evidence" value="ECO:0007669"/>
    <property type="project" value="UniProtKB-UniRule"/>
</dbReference>
<dbReference type="GO" id="GO:0071555">
    <property type="term" value="P:cell wall organization"/>
    <property type="evidence" value="ECO:0007669"/>
    <property type="project" value="UniProtKB-KW"/>
</dbReference>
<dbReference type="GO" id="GO:0009245">
    <property type="term" value="P:lipid A biosynthetic process"/>
    <property type="evidence" value="ECO:0007669"/>
    <property type="project" value="UniProtKB-UniRule"/>
</dbReference>
<dbReference type="GO" id="GO:0009252">
    <property type="term" value="P:peptidoglycan biosynthetic process"/>
    <property type="evidence" value="ECO:0007669"/>
    <property type="project" value="UniProtKB-UniRule"/>
</dbReference>
<dbReference type="GO" id="GO:0008360">
    <property type="term" value="P:regulation of cell shape"/>
    <property type="evidence" value="ECO:0007669"/>
    <property type="project" value="UniProtKB-KW"/>
</dbReference>
<dbReference type="GO" id="GO:0006048">
    <property type="term" value="P:UDP-N-acetylglucosamine biosynthetic process"/>
    <property type="evidence" value="ECO:0007669"/>
    <property type="project" value="UniProtKB-UniPathway"/>
</dbReference>
<dbReference type="CDD" id="cd02540">
    <property type="entry name" value="GT2_GlmU_N_bac"/>
    <property type="match status" value="1"/>
</dbReference>
<dbReference type="CDD" id="cd03353">
    <property type="entry name" value="LbH_GlmU_C"/>
    <property type="match status" value="1"/>
</dbReference>
<dbReference type="Gene3D" id="2.160.10.10">
    <property type="entry name" value="Hexapeptide repeat proteins"/>
    <property type="match status" value="1"/>
</dbReference>
<dbReference type="Gene3D" id="3.90.550.10">
    <property type="entry name" value="Spore Coat Polysaccharide Biosynthesis Protein SpsA, Chain A"/>
    <property type="match status" value="1"/>
</dbReference>
<dbReference type="HAMAP" id="MF_01631">
    <property type="entry name" value="GlmU"/>
    <property type="match status" value="1"/>
</dbReference>
<dbReference type="InterPro" id="IPR005882">
    <property type="entry name" value="Bifunctional_GlmU"/>
</dbReference>
<dbReference type="InterPro" id="IPR050065">
    <property type="entry name" value="GlmU-like"/>
</dbReference>
<dbReference type="InterPro" id="IPR038009">
    <property type="entry name" value="GlmU_C_LbH"/>
</dbReference>
<dbReference type="InterPro" id="IPR001451">
    <property type="entry name" value="Hexapep"/>
</dbReference>
<dbReference type="InterPro" id="IPR005835">
    <property type="entry name" value="NTP_transferase_dom"/>
</dbReference>
<dbReference type="InterPro" id="IPR029044">
    <property type="entry name" value="Nucleotide-diphossugar_trans"/>
</dbReference>
<dbReference type="InterPro" id="IPR011004">
    <property type="entry name" value="Trimer_LpxA-like_sf"/>
</dbReference>
<dbReference type="NCBIfam" id="TIGR01173">
    <property type="entry name" value="glmU"/>
    <property type="match status" value="1"/>
</dbReference>
<dbReference type="NCBIfam" id="NF010934">
    <property type="entry name" value="PRK14354.1"/>
    <property type="match status" value="1"/>
</dbReference>
<dbReference type="PANTHER" id="PTHR43584:SF3">
    <property type="entry name" value="BIFUNCTIONAL PROTEIN GLMU"/>
    <property type="match status" value="1"/>
</dbReference>
<dbReference type="PANTHER" id="PTHR43584">
    <property type="entry name" value="NUCLEOTIDYL TRANSFERASE"/>
    <property type="match status" value="1"/>
</dbReference>
<dbReference type="Pfam" id="PF00132">
    <property type="entry name" value="Hexapep"/>
    <property type="match status" value="2"/>
</dbReference>
<dbReference type="Pfam" id="PF00483">
    <property type="entry name" value="NTP_transferase"/>
    <property type="match status" value="1"/>
</dbReference>
<dbReference type="SUPFAM" id="SSF53448">
    <property type="entry name" value="Nucleotide-diphospho-sugar transferases"/>
    <property type="match status" value="1"/>
</dbReference>
<dbReference type="SUPFAM" id="SSF51161">
    <property type="entry name" value="Trimeric LpxA-like enzymes"/>
    <property type="match status" value="1"/>
</dbReference>
<proteinExistence type="inferred from homology"/>
<evidence type="ECO:0000255" key="1">
    <source>
        <dbReference type="HAMAP-Rule" id="MF_01631"/>
    </source>
</evidence>
<protein>
    <recommendedName>
        <fullName evidence="1">Bifunctional protein GlmU</fullName>
    </recommendedName>
    <domain>
        <recommendedName>
            <fullName evidence="1">UDP-N-acetylglucosamine pyrophosphorylase</fullName>
            <ecNumber evidence="1">2.7.7.23</ecNumber>
        </recommendedName>
        <alternativeName>
            <fullName evidence="1">N-acetylglucosamine-1-phosphate uridyltransferase</fullName>
        </alternativeName>
    </domain>
    <domain>
        <recommendedName>
            <fullName evidence="1">Glucosamine-1-phosphate N-acetyltransferase</fullName>
            <ecNumber evidence="1">2.3.1.157</ecNumber>
        </recommendedName>
    </domain>
</protein>
<comment type="function">
    <text evidence="1">Catalyzes the last two sequential reactions in the de novo biosynthetic pathway for UDP-N-acetylglucosamine (UDP-GlcNAc). The C-terminal domain catalyzes the transfer of acetyl group from acetyl coenzyme A to glucosamine-1-phosphate (GlcN-1-P) to produce N-acetylglucosamine-1-phosphate (GlcNAc-1-P), which is converted into UDP-GlcNAc by the transfer of uridine 5-monophosphate (from uridine 5-triphosphate), a reaction catalyzed by the N-terminal domain.</text>
</comment>
<comment type="catalytic activity">
    <reaction evidence="1">
        <text>alpha-D-glucosamine 1-phosphate + acetyl-CoA = N-acetyl-alpha-D-glucosamine 1-phosphate + CoA + H(+)</text>
        <dbReference type="Rhea" id="RHEA:13725"/>
        <dbReference type="ChEBI" id="CHEBI:15378"/>
        <dbReference type="ChEBI" id="CHEBI:57287"/>
        <dbReference type="ChEBI" id="CHEBI:57288"/>
        <dbReference type="ChEBI" id="CHEBI:57776"/>
        <dbReference type="ChEBI" id="CHEBI:58516"/>
        <dbReference type="EC" id="2.3.1.157"/>
    </reaction>
</comment>
<comment type="catalytic activity">
    <reaction evidence="1">
        <text>N-acetyl-alpha-D-glucosamine 1-phosphate + UTP + H(+) = UDP-N-acetyl-alpha-D-glucosamine + diphosphate</text>
        <dbReference type="Rhea" id="RHEA:13509"/>
        <dbReference type="ChEBI" id="CHEBI:15378"/>
        <dbReference type="ChEBI" id="CHEBI:33019"/>
        <dbReference type="ChEBI" id="CHEBI:46398"/>
        <dbReference type="ChEBI" id="CHEBI:57705"/>
        <dbReference type="ChEBI" id="CHEBI:57776"/>
        <dbReference type="EC" id="2.7.7.23"/>
    </reaction>
</comment>
<comment type="cofactor">
    <cofactor evidence="1">
        <name>Mg(2+)</name>
        <dbReference type="ChEBI" id="CHEBI:18420"/>
    </cofactor>
    <text evidence="1">Binds 1 Mg(2+) ion per subunit.</text>
</comment>
<comment type="pathway">
    <text evidence="1">Nucleotide-sugar biosynthesis; UDP-N-acetyl-alpha-D-glucosamine biosynthesis; N-acetyl-alpha-D-glucosamine 1-phosphate from alpha-D-glucosamine 6-phosphate (route II): step 2/2.</text>
</comment>
<comment type="pathway">
    <text evidence="1">Nucleotide-sugar biosynthesis; UDP-N-acetyl-alpha-D-glucosamine biosynthesis; UDP-N-acetyl-alpha-D-glucosamine from N-acetyl-alpha-D-glucosamine 1-phosphate: step 1/1.</text>
</comment>
<comment type="pathway">
    <text evidence="1">Bacterial outer membrane biogenesis; LPS lipid A biosynthesis.</text>
</comment>
<comment type="subunit">
    <text evidence="1">Homotrimer.</text>
</comment>
<comment type="subcellular location">
    <subcellularLocation>
        <location evidence="1">Cytoplasm</location>
    </subcellularLocation>
</comment>
<comment type="similarity">
    <text evidence="1">In the N-terminal section; belongs to the N-acetylglucosamine-1-phosphate uridyltransferase family.</text>
</comment>
<comment type="similarity">
    <text evidence="1">In the C-terminal section; belongs to the transferase hexapeptide repeat family.</text>
</comment>
<name>GLMU_ENTFA</name>
<keyword id="KW-0012">Acyltransferase</keyword>
<keyword id="KW-0133">Cell shape</keyword>
<keyword id="KW-0961">Cell wall biogenesis/degradation</keyword>
<keyword id="KW-0963">Cytoplasm</keyword>
<keyword id="KW-0460">Magnesium</keyword>
<keyword id="KW-0479">Metal-binding</keyword>
<keyword id="KW-0511">Multifunctional enzyme</keyword>
<keyword id="KW-0548">Nucleotidyltransferase</keyword>
<keyword id="KW-0573">Peptidoglycan synthesis</keyword>
<keyword id="KW-1185">Reference proteome</keyword>
<keyword id="KW-0677">Repeat</keyword>
<keyword id="KW-0808">Transferase</keyword>
<reference key="1">
    <citation type="journal article" date="2003" name="Science">
        <title>Role of mobile DNA in the evolution of vancomycin-resistant Enterococcus faecalis.</title>
        <authorList>
            <person name="Paulsen I.T."/>
            <person name="Banerjei L."/>
            <person name="Myers G.S.A."/>
            <person name="Nelson K.E."/>
            <person name="Seshadri R."/>
            <person name="Read T.D."/>
            <person name="Fouts D.E."/>
            <person name="Eisen J.A."/>
            <person name="Gill S.R."/>
            <person name="Heidelberg J.F."/>
            <person name="Tettelin H."/>
            <person name="Dodson R.J."/>
            <person name="Umayam L.A."/>
            <person name="Brinkac L.M."/>
            <person name="Beanan M.J."/>
            <person name="Daugherty S.C."/>
            <person name="DeBoy R.T."/>
            <person name="Durkin S.A."/>
            <person name="Kolonay J.F."/>
            <person name="Madupu R."/>
            <person name="Nelson W.C."/>
            <person name="Vamathevan J.J."/>
            <person name="Tran B."/>
            <person name="Upton J."/>
            <person name="Hansen T."/>
            <person name="Shetty J."/>
            <person name="Khouri H.M."/>
            <person name="Utterback T.R."/>
            <person name="Radune D."/>
            <person name="Ketchum K.A."/>
            <person name="Dougherty B.A."/>
            <person name="Fraser C.M."/>
        </authorList>
    </citation>
    <scope>NUCLEOTIDE SEQUENCE [LARGE SCALE GENOMIC DNA]</scope>
    <source>
        <strain>ATCC 700802 / V583</strain>
    </source>
</reference>